<organism>
    <name type="scientific">Rhodopseudomonas palustris (strain BisB5)</name>
    <dbReference type="NCBI Taxonomy" id="316057"/>
    <lineage>
        <taxon>Bacteria</taxon>
        <taxon>Pseudomonadati</taxon>
        <taxon>Pseudomonadota</taxon>
        <taxon>Alphaproteobacteria</taxon>
        <taxon>Hyphomicrobiales</taxon>
        <taxon>Nitrobacteraceae</taxon>
        <taxon>Rhodopseudomonas</taxon>
    </lineage>
</organism>
<dbReference type="EC" id="2.7.7.8" evidence="1"/>
<dbReference type="EMBL" id="CP000283">
    <property type="protein sequence ID" value="ABE37467.1"/>
    <property type="molecule type" value="Genomic_DNA"/>
</dbReference>
<dbReference type="SMR" id="Q13EM2"/>
<dbReference type="STRING" id="316057.RPD_0227"/>
<dbReference type="KEGG" id="rpd:RPD_0227"/>
<dbReference type="eggNOG" id="COG1185">
    <property type="taxonomic scope" value="Bacteria"/>
</dbReference>
<dbReference type="HOGENOM" id="CLU_004217_2_2_5"/>
<dbReference type="BioCyc" id="RPAL316057:RPD_RS01150-MONOMER"/>
<dbReference type="Proteomes" id="UP000001818">
    <property type="component" value="Chromosome"/>
</dbReference>
<dbReference type="GO" id="GO:0005829">
    <property type="term" value="C:cytosol"/>
    <property type="evidence" value="ECO:0007669"/>
    <property type="project" value="TreeGrafter"/>
</dbReference>
<dbReference type="GO" id="GO:0000175">
    <property type="term" value="F:3'-5'-RNA exonuclease activity"/>
    <property type="evidence" value="ECO:0007669"/>
    <property type="project" value="TreeGrafter"/>
</dbReference>
<dbReference type="GO" id="GO:0000287">
    <property type="term" value="F:magnesium ion binding"/>
    <property type="evidence" value="ECO:0007669"/>
    <property type="project" value="UniProtKB-UniRule"/>
</dbReference>
<dbReference type="GO" id="GO:0004654">
    <property type="term" value="F:polyribonucleotide nucleotidyltransferase activity"/>
    <property type="evidence" value="ECO:0007669"/>
    <property type="project" value="UniProtKB-UniRule"/>
</dbReference>
<dbReference type="GO" id="GO:0003723">
    <property type="term" value="F:RNA binding"/>
    <property type="evidence" value="ECO:0007669"/>
    <property type="project" value="UniProtKB-UniRule"/>
</dbReference>
<dbReference type="GO" id="GO:0006402">
    <property type="term" value="P:mRNA catabolic process"/>
    <property type="evidence" value="ECO:0007669"/>
    <property type="project" value="UniProtKB-UniRule"/>
</dbReference>
<dbReference type="GO" id="GO:0006396">
    <property type="term" value="P:RNA processing"/>
    <property type="evidence" value="ECO:0007669"/>
    <property type="project" value="InterPro"/>
</dbReference>
<dbReference type="CDD" id="cd02393">
    <property type="entry name" value="KH-I_PNPase"/>
    <property type="match status" value="1"/>
</dbReference>
<dbReference type="CDD" id="cd11363">
    <property type="entry name" value="RNase_PH_PNPase_1"/>
    <property type="match status" value="1"/>
</dbReference>
<dbReference type="CDD" id="cd11364">
    <property type="entry name" value="RNase_PH_PNPase_2"/>
    <property type="match status" value="1"/>
</dbReference>
<dbReference type="CDD" id="cd04472">
    <property type="entry name" value="S1_PNPase"/>
    <property type="match status" value="1"/>
</dbReference>
<dbReference type="FunFam" id="2.40.50.140:FF:000107">
    <property type="entry name" value="Polyribonucleotide nucleotidyltransferase"/>
    <property type="match status" value="1"/>
</dbReference>
<dbReference type="FunFam" id="3.30.1370.10:FF:000001">
    <property type="entry name" value="Polyribonucleotide nucleotidyltransferase"/>
    <property type="match status" value="1"/>
</dbReference>
<dbReference type="FunFam" id="3.30.230.70:FF:000001">
    <property type="entry name" value="Polyribonucleotide nucleotidyltransferase"/>
    <property type="match status" value="1"/>
</dbReference>
<dbReference type="FunFam" id="3.30.230.70:FF:000002">
    <property type="entry name" value="Polyribonucleotide nucleotidyltransferase"/>
    <property type="match status" value="1"/>
</dbReference>
<dbReference type="Gene3D" id="3.30.230.70">
    <property type="entry name" value="GHMP Kinase, N-terminal domain"/>
    <property type="match status" value="2"/>
</dbReference>
<dbReference type="Gene3D" id="3.30.1370.10">
    <property type="entry name" value="K Homology domain, type 1"/>
    <property type="match status" value="1"/>
</dbReference>
<dbReference type="Gene3D" id="2.40.50.140">
    <property type="entry name" value="Nucleic acid-binding proteins"/>
    <property type="match status" value="1"/>
</dbReference>
<dbReference type="HAMAP" id="MF_01595">
    <property type="entry name" value="PNPase"/>
    <property type="match status" value="1"/>
</dbReference>
<dbReference type="InterPro" id="IPR001247">
    <property type="entry name" value="ExoRNase_PH_dom1"/>
</dbReference>
<dbReference type="InterPro" id="IPR015847">
    <property type="entry name" value="ExoRNase_PH_dom2"/>
</dbReference>
<dbReference type="InterPro" id="IPR036345">
    <property type="entry name" value="ExoRNase_PH_dom2_sf"/>
</dbReference>
<dbReference type="InterPro" id="IPR004087">
    <property type="entry name" value="KH_dom"/>
</dbReference>
<dbReference type="InterPro" id="IPR004088">
    <property type="entry name" value="KH_dom_type_1"/>
</dbReference>
<dbReference type="InterPro" id="IPR036612">
    <property type="entry name" value="KH_dom_type_1_sf"/>
</dbReference>
<dbReference type="InterPro" id="IPR012340">
    <property type="entry name" value="NA-bd_OB-fold"/>
</dbReference>
<dbReference type="InterPro" id="IPR012162">
    <property type="entry name" value="PNPase"/>
</dbReference>
<dbReference type="InterPro" id="IPR027408">
    <property type="entry name" value="PNPase/RNase_PH_dom_sf"/>
</dbReference>
<dbReference type="InterPro" id="IPR015848">
    <property type="entry name" value="PNPase_PH_RNA-bd_bac/org-type"/>
</dbReference>
<dbReference type="InterPro" id="IPR036456">
    <property type="entry name" value="PNPase_PH_RNA-bd_sf"/>
</dbReference>
<dbReference type="InterPro" id="IPR020568">
    <property type="entry name" value="Ribosomal_Su5_D2-typ_SF"/>
</dbReference>
<dbReference type="InterPro" id="IPR003029">
    <property type="entry name" value="S1_domain"/>
</dbReference>
<dbReference type="NCBIfam" id="TIGR03591">
    <property type="entry name" value="polynuc_phos"/>
    <property type="match status" value="1"/>
</dbReference>
<dbReference type="NCBIfam" id="NF008805">
    <property type="entry name" value="PRK11824.1"/>
    <property type="match status" value="1"/>
</dbReference>
<dbReference type="PANTHER" id="PTHR11252">
    <property type="entry name" value="POLYRIBONUCLEOTIDE NUCLEOTIDYLTRANSFERASE"/>
    <property type="match status" value="1"/>
</dbReference>
<dbReference type="PANTHER" id="PTHR11252:SF0">
    <property type="entry name" value="POLYRIBONUCLEOTIDE NUCLEOTIDYLTRANSFERASE 1, MITOCHONDRIAL"/>
    <property type="match status" value="1"/>
</dbReference>
<dbReference type="Pfam" id="PF00013">
    <property type="entry name" value="KH_1"/>
    <property type="match status" value="1"/>
</dbReference>
<dbReference type="Pfam" id="PF03726">
    <property type="entry name" value="PNPase"/>
    <property type="match status" value="1"/>
</dbReference>
<dbReference type="Pfam" id="PF01138">
    <property type="entry name" value="RNase_PH"/>
    <property type="match status" value="2"/>
</dbReference>
<dbReference type="Pfam" id="PF03725">
    <property type="entry name" value="RNase_PH_C"/>
    <property type="match status" value="2"/>
</dbReference>
<dbReference type="Pfam" id="PF00575">
    <property type="entry name" value="S1"/>
    <property type="match status" value="1"/>
</dbReference>
<dbReference type="PIRSF" id="PIRSF005499">
    <property type="entry name" value="PNPase"/>
    <property type="match status" value="1"/>
</dbReference>
<dbReference type="SMART" id="SM00322">
    <property type="entry name" value="KH"/>
    <property type="match status" value="1"/>
</dbReference>
<dbReference type="SMART" id="SM00316">
    <property type="entry name" value="S1"/>
    <property type="match status" value="1"/>
</dbReference>
<dbReference type="SUPFAM" id="SSF54791">
    <property type="entry name" value="Eukaryotic type KH-domain (KH-domain type I)"/>
    <property type="match status" value="1"/>
</dbReference>
<dbReference type="SUPFAM" id="SSF50249">
    <property type="entry name" value="Nucleic acid-binding proteins"/>
    <property type="match status" value="1"/>
</dbReference>
<dbReference type="SUPFAM" id="SSF46915">
    <property type="entry name" value="Polynucleotide phosphorylase/guanosine pentaphosphate synthase (PNPase/GPSI), domain 3"/>
    <property type="match status" value="1"/>
</dbReference>
<dbReference type="SUPFAM" id="SSF55666">
    <property type="entry name" value="Ribonuclease PH domain 2-like"/>
    <property type="match status" value="2"/>
</dbReference>
<dbReference type="SUPFAM" id="SSF54211">
    <property type="entry name" value="Ribosomal protein S5 domain 2-like"/>
    <property type="match status" value="2"/>
</dbReference>
<dbReference type="PROSITE" id="PS50084">
    <property type="entry name" value="KH_TYPE_1"/>
    <property type="match status" value="1"/>
</dbReference>
<dbReference type="PROSITE" id="PS50126">
    <property type="entry name" value="S1"/>
    <property type="match status" value="1"/>
</dbReference>
<name>PNP_RHOPS</name>
<proteinExistence type="inferred from homology"/>
<keyword id="KW-0963">Cytoplasm</keyword>
<keyword id="KW-0460">Magnesium</keyword>
<keyword id="KW-0479">Metal-binding</keyword>
<keyword id="KW-0548">Nucleotidyltransferase</keyword>
<keyword id="KW-0694">RNA-binding</keyword>
<keyword id="KW-0808">Transferase</keyword>
<accession>Q13EM2</accession>
<gene>
    <name evidence="1" type="primary">pnp</name>
    <name type="ordered locus">RPD_0227</name>
</gene>
<comment type="function">
    <text evidence="1">Involved in mRNA degradation. Catalyzes the phosphorolysis of single-stranded polyribonucleotides processively in the 3'- to 5'-direction.</text>
</comment>
<comment type="catalytic activity">
    <reaction evidence="1">
        <text>RNA(n+1) + phosphate = RNA(n) + a ribonucleoside 5'-diphosphate</text>
        <dbReference type="Rhea" id="RHEA:22096"/>
        <dbReference type="Rhea" id="RHEA-COMP:14527"/>
        <dbReference type="Rhea" id="RHEA-COMP:17342"/>
        <dbReference type="ChEBI" id="CHEBI:43474"/>
        <dbReference type="ChEBI" id="CHEBI:57930"/>
        <dbReference type="ChEBI" id="CHEBI:140395"/>
        <dbReference type="EC" id="2.7.7.8"/>
    </reaction>
</comment>
<comment type="cofactor">
    <cofactor evidence="1">
        <name>Mg(2+)</name>
        <dbReference type="ChEBI" id="CHEBI:18420"/>
    </cofactor>
</comment>
<comment type="subcellular location">
    <subcellularLocation>
        <location evidence="1">Cytoplasm</location>
    </subcellularLocation>
</comment>
<comment type="similarity">
    <text evidence="1">Belongs to the polyribonucleotide nucleotidyltransferase family.</text>
</comment>
<reference key="1">
    <citation type="submission" date="2006-03" db="EMBL/GenBank/DDBJ databases">
        <title>Complete sequence of Rhodopseudomonas palustris BisB5.</title>
        <authorList>
            <consortium name="US DOE Joint Genome Institute"/>
            <person name="Copeland A."/>
            <person name="Lucas S."/>
            <person name="Lapidus A."/>
            <person name="Barry K."/>
            <person name="Detter J.C."/>
            <person name="Glavina del Rio T."/>
            <person name="Hammon N."/>
            <person name="Israni S."/>
            <person name="Dalin E."/>
            <person name="Tice H."/>
            <person name="Pitluck S."/>
            <person name="Chain P."/>
            <person name="Malfatti S."/>
            <person name="Shin M."/>
            <person name="Vergez L."/>
            <person name="Schmutz J."/>
            <person name="Larimer F."/>
            <person name="Land M."/>
            <person name="Hauser L."/>
            <person name="Pelletier D.A."/>
            <person name="Kyrpides N."/>
            <person name="Lykidis A."/>
            <person name="Oda Y."/>
            <person name="Harwood C.S."/>
            <person name="Richardson P."/>
        </authorList>
    </citation>
    <scope>NUCLEOTIDE SEQUENCE [LARGE SCALE GENOMIC DNA]</scope>
    <source>
        <strain>BisB5</strain>
    </source>
</reference>
<sequence length="722" mass="78316">MFNKHSVEIDWGGRPLRLETGKVARQADGAVVATYGETVVLATVVAAKTPREGVDFLPLTVDYQEKTYAAGRIPGGYFKREGRPTEKETLVSRLIDRPIRPLFADGWRNETQVIVTVLSHDMENDPDILALVASSAALTLSGAPFKGPIGAARVGFINDEYVLNPVLDEMPETQLDLVVAGTSDAVLMVESEAKELSEEIMLGAVMFGHRHFQPVIDAIIALAEKAAKEPRELTVIDDSAIEKEMLGLVEQELRAAYAIAVKQERYAAVGKVKEKAIAHFFPEGQEPKYDKLRIAGVFKELEAKIVRWNILDTGKRIDGRDSKTVRSIIAEAGVLPRAHGSALFTRGETQALVVTTLGTGEDEQYVDSLAGTYKETFLLHYNFPPYSVGETGRLGGTKRREIGHGKLAWRAIRPVLPPHHEFPYTIRVVSEITESNGSSSMASVCGASLALMDAGVPLKRPTAGIAMGLILEGERFAVLSDILGDEDHLGDMDFKVAGTEQGVTSLQMDIKIAGITEEIMKVALGQAKDGRIHILGEMSKALDRARAELGEHAPRIETFKIPTDKIREVIGTGGKVIREIVEKTGAKVNIEDDGTVKVASSDGESIKAAIKWIKSIASDPEVGEIYEGTVVKVMEFGAFVNFFGAKDGLVHISQLAAGRVQKTSDVVKEGDKVKVKLLGFDDRGKTRLSMKVVDQDTGEDLEAKQKAEAKAEDEAPAQAAGE</sequence>
<evidence type="ECO:0000255" key="1">
    <source>
        <dbReference type="HAMAP-Rule" id="MF_01595"/>
    </source>
</evidence>
<evidence type="ECO:0000256" key="2">
    <source>
        <dbReference type="SAM" id="MobiDB-lite"/>
    </source>
</evidence>
<protein>
    <recommendedName>
        <fullName evidence="1">Polyribonucleotide nucleotidyltransferase</fullName>
        <ecNumber evidence="1">2.7.7.8</ecNumber>
    </recommendedName>
    <alternativeName>
        <fullName evidence="1">Polynucleotide phosphorylase</fullName>
        <shortName evidence="1">PNPase</shortName>
    </alternativeName>
</protein>
<feature type="chain" id="PRO_0000329812" description="Polyribonucleotide nucleotidyltransferase">
    <location>
        <begin position="1"/>
        <end position="722"/>
    </location>
</feature>
<feature type="domain" description="KH" evidence="1">
    <location>
        <begin position="554"/>
        <end position="613"/>
    </location>
</feature>
<feature type="domain" description="S1 motif" evidence="1">
    <location>
        <begin position="623"/>
        <end position="691"/>
    </location>
</feature>
<feature type="region of interest" description="Disordered" evidence="2">
    <location>
        <begin position="691"/>
        <end position="722"/>
    </location>
</feature>
<feature type="compositionally biased region" description="Basic and acidic residues" evidence="2">
    <location>
        <begin position="701"/>
        <end position="713"/>
    </location>
</feature>
<feature type="binding site" evidence="1">
    <location>
        <position position="487"/>
    </location>
    <ligand>
        <name>Mg(2+)</name>
        <dbReference type="ChEBI" id="CHEBI:18420"/>
    </ligand>
</feature>
<feature type="binding site" evidence="1">
    <location>
        <position position="493"/>
    </location>
    <ligand>
        <name>Mg(2+)</name>
        <dbReference type="ChEBI" id="CHEBI:18420"/>
    </ligand>
</feature>